<dbReference type="EC" id="2.1.1.289"/>
<dbReference type="EMBL" id="L77117">
    <property type="protein sequence ID" value="AAB99541.1"/>
    <property type="molecule type" value="Genomic_DNA"/>
</dbReference>
<dbReference type="PIR" id="A64490">
    <property type="entry name" value="A64490"/>
</dbReference>
<dbReference type="RefSeq" id="WP_010871046.1">
    <property type="nucleotide sequence ID" value="NC_000909.1"/>
</dbReference>
<dbReference type="SMR" id="Q58917"/>
<dbReference type="FunCoup" id="Q58917">
    <property type="interactions" value="110"/>
</dbReference>
<dbReference type="STRING" id="243232.MJ_1522"/>
<dbReference type="PaxDb" id="243232-MJ_1522"/>
<dbReference type="EnsemblBacteria" id="AAB99541">
    <property type="protein sequence ID" value="AAB99541"/>
    <property type="gene ID" value="MJ_1522"/>
</dbReference>
<dbReference type="GeneID" id="1452430"/>
<dbReference type="KEGG" id="mja:MJ_1522"/>
<dbReference type="eggNOG" id="arCOG00650">
    <property type="taxonomic scope" value="Archaea"/>
</dbReference>
<dbReference type="HOGENOM" id="CLU_089162_2_0_2"/>
<dbReference type="InParanoid" id="Q58917"/>
<dbReference type="OrthoDB" id="42238at2157"/>
<dbReference type="PhylomeDB" id="Q58917"/>
<dbReference type="UniPathway" id="UPA00148">
    <property type="reaction ID" value="UER00229"/>
</dbReference>
<dbReference type="Proteomes" id="UP000000805">
    <property type="component" value="Chromosome"/>
</dbReference>
<dbReference type="GO" id="GO:0043777">
    <property type="term" value="F:cobalt-precorrin-7 C15-methyltransferase activity"/>
    <property type="evidence" value="ECO:0007669"/>
    <property type="project" value="RHEA"/>
</dbReference>
<dbReference type="GO" id="GO:0008276">
    <property type="term" value="F:protein methyltransferase activity"/>
    <property type="evidence" value="ECO:0007669"/>
    <property type="project" value="InterPro"/>
</dbReference>
<dbReference type="GO" id="GO:0009236">
    <property type="term" value="P:cobalamin biosynthetic process"/>
    <property type="evidence" value="ECO:0007669"/>
    <property type="project" value="UniProtKB-UniPathway"/>
</dbReference>
<dbReference type="GO" id="GO:0032259">
    <property type="term" value="P:methylation"/>
    <property type="evidence" value="ECO:0007669"/>
    <property type="project" value="UniProtKB-KW"/>
</dbReference>
<dbReference type="CDD" id="cd11644">
    <property type="entry name" value="Precorrin-6Y-MT"/>
    <property type="match status" value="1"/>
</dbReference>
<dbReference type="Gene3D" id="3.40.1010.10">
    <property type="entry name" value="Cobalt-precorrin-4 Transmethylase, Domain 1"/>
    <property type="match status" value="1"/>
</dbReference>
<dbReference type="Gene3D" id="3.30.950.10">
    <property type="entry name" value="Methyltransferase, Cobalt-precorrin-4 Transmethylase, Domain 2"/>
    <property type="match status" value="1"/>
</dbReference>
<dbReference type="InterPro" id="IPR000878">
    <property type="entry name" value="4pyrrol_Mease"/>
</dbReference>
<dbReference type="InterPro" id="IPR035996">
    <property type="entry name" value="4pyrrol_Methylase_sf"/>
</dbReference>
<dbReference type="InterPro" id="IPR014777">
    <property type="entry name" value="4pyrrole_Mease_sub1"/>
</dbReference>
<dbReference type="InterPro" id="IPR014776">
    <property type="entry name" value="4pyrrole_Mease_sub2"/>
</dbReference>
<dbReference type="InterPro" id="IPR012818">
    <property type="entry name" value="CbiE"/>
</dbReference>
<dbReference type="InterPro" id="IPR050714">
    <property type="entry name" value="Cobalamin_biosynth_MTase"/>
</dbReference>
<dbReference type="NCBIfam" id="TIGR02467">
    <property type="entry name" value="CbiE"/>
    <property type="match status" value="1"/>
</dbReference>
<dbReference type="NCBIfam" id="NF004460">
    <property type="entry name" value="PRK05787.2-3"/>
    <property type="match status" value="1"/>
</dbReference>
<dbReference type="PANTHER" id="PTHR43182">
    <property type="entry name" value="COBALT-PRECORRIN-6B C(15)-METHYLTRANSFERASE (DECARBOXYLATING)"/>
    <property type="match status" value="1"/>
</dbReference>
<dbReference type="PANTHER" id="PTHR43182:SF1">
    <property type="entry name" value="COBALT-PRECORRIN-7 C(5)-METHYLTRANSFERASE"/>
    <property type="match status" value="1"/>
</dbReference>
<dbReference type="Pfam" id="PF00590">
    <property type="entry name" value="TP_methylase"/>
    <property type="match status" value="1"/>
</dbReference>
<dbReference type="SUPFAM" id="SSF53790">
    <property type="entry name" value="Tetrapyrrole methylase"/>
    <property type="match status" value="1"/>
</dbReference>
<gene>
    <name type="primary">cbiE</name>
    <name type="synonym">cobL</name>
    <name type="ordered locus">MJ1522</name>
</gene>
<accession>Q58917</accession>
<organism>
    <name type="scientific">Methanocaldococcus jannaschii (strain ATCC 43067 / DSM 2661 / JAL-1 / JCM 10045 / NBRC 100440)</name>
    <name type="common">Methanococcus jannaschii</name>
    <dbReference type="NCBI Taxonomy" id="243232"/>
    <lineage>
        <taxon>Archaea</taxon>
        <taxon>Methanobacteriati</taxon>
        <taxon>Methanobacteriota</taxon>
        <taxon>Methanomada group</taxon>
        <taxon>Methanococci</taxon>
        <taxon>Methanococcales</taxon>
        <taxon>Methanocaldococcaceae</taxon>
        <taxon>Methanocaldococcus</taxon>
    </lineage>
</organism>
<proteinExistence type="inferred from homology"/>
<reference key="1">
    <citation type="journal article" date="1996" name="Science">
        <title>Complete genome sequence of the methanogenic archaeon, Methanococcus jannaschii.</title>
        <authorList>
            <person name="Bult C.J."/>
            <person name="White O."/>
            <person name="Olsen G.J."/>
            <person name="Zhou L."/>
            <person name="Fleischmann R.D."/>
            <person name="Sutton G.G."/>
            <person name="Blake J.A."/>
            <person name="FitzGerald L.M."/>
            <person name="Clayton R.A."/>
            <person name="Gocayne J.D."/>
            <person name="Kerlavage A.R."/>
            <person name="Dougherty B.A."/>
            <person name="Tomb J.-F."/>
            <person name="Adams M.D."/>
            <person name="Reich C.I."/>
            <person name="Overbeek R."/>
            <person name="Kirkness E.F."/>
            <person name="Weinstock K.G."/>
            <person name="Merrick J.M."/>
            <person name="Glodek A."/>
            <person name="Scott J.L."/>
            <person name="Geoghagen N.S.M."/>
            <person name="Weidman J.F."/>
            <person name="Fuhrmann J.L."/>
            <person name="Nguyen D."/>
            <person name="Utterback T.R."/>
            <person name="Kelley J.M."/>
            <person name="Peterson J.D."/>
            <person name="Sadow P.W."/>
            <person name="Hanna M.C."/>
            <person name="Cotton M.D."/>
            <person name="Roberts K.M."/>
            <person name="Hurst M.A."/>
            <person name="Kaine B.P."/>
            <person name="Borodovsky M."/>
            <person name="Klenk H.-P."/>
            <person name="Fraser C.M."/>
            <person name="Smith H.O."/>
            <person name="Woese C.R."/>
            <person name="Venter J.C."/>
        </authorList>
    </citation>
    <scope>NUCLEOTIDE SEQUENCE [LARGE SCALE GENOMIC DNA]</scope>
    <source>
        <strain>ATCC 43067 / DSM 2661 / JAL-1 / JCM 10045 / NBRC 100440</strain>
    </source>
</reference>
<name>CBIE_METJA</name>
<protein>
    <recommendedName>
        <fullName>Probable cobalt-precorrin-7 C(5)-methyltransferase</fullName>
        <ecNumber>2.1.1.289</ecNumber>
    </recommendedName>
    <alternativeName>
        <fullName>Cobalt-precorrin-6Y C(5)-methyltransferase</fullName>
        <shortName>Cobalt-precorrin-6 methyltransferase</shortName>
        <shortName>Cobalt-precorrin-6Y methylase</shortName>
    </alternativeName>
</protein>
<comment type="function">
    <text evidence="1">Catalyzes the methylation of C-5 in cobalt-precorrin-7 to form cobalt-precorrin-8.</text>
</comment>
<comment type="catalytic activity">
    <reaction>
        <text>Co-precorrin-7 + S-adenosyl-L-methionine = Co-precorrin-8X + S-adenosyl-L-homocysteine + H(+)</text>
        <dbReference type="Rhea" id="RHEA:34591"/>
        <dbReference type="ChEBI" id="CHEBI:15378"/>
        <dbReference type="ChEBI" id="CHEBI:57856"/>
        <dbReference type="ChEBI" id="CHEBI:59789"/>
        <dbReference type="ChEBI" id="CHEBI:70791"/>
        <dbReference type="ChEBI" id="CHEBI:70792"/>
        <dbReference type="EC" id="2.1.1.289"/>
    </reaction>
</comment>
<comment type="pathway">
    <text>Cofactor biosynthesis; adenosylcobalamin biosynthesis; cob(II)yrinate a,c-diamide from sirohydrochlorin (anaerobic route): step 8/10.</text>
</comment>
<comment type="similarity">
    <text evidence="2">Belongs to the precorrin methyltransferase family.</text>
</comment>
<sequence length="211" mass="23806">MIYIVGIGPGDREYLTLKAIKIVENADLVVGSKRALELFNIDEDKKITLTKNLIGELKELIKNENIKNKKIAILSTGDPCFSGLLKTLLKIGAKKEDIEAISGISSIQIAAAKLKISWEDYYIITLHGKEENRKKLLNLIKNHEKVIFLPNNLKEDAKFLINNGINPDTKIWVLENLTYENEKISLKSLKEIANGDFSYLTVCVYEGDEEI</sequence>
<keyword id="KW-0169">Cobalamin biosynthesis</keyword>
<keyword id="KW-0489">Methyltransferase</keyword>
<keyword id="KW-1185">Reference proteome</keyword>
<keyword id="KW-0949">S-adenosyl-L-methionine</keyword>
<keyword id="KW-0808">Transferase</keyword>
<evidence type="ECO:0000250" key="1"/>
<evidence type="ECO:0000305" key="2"/>
<feature type="chain" id="PRO_0000150410" description="Probable cobalt-precorrin-7 C(5)-methyltransferase">
    <location>
        <begin position="1"/>
        <end position="211"/>
    </location>
</feature>